<name>RS15_PYRAE</name>
<feature type="chain" id="PRO_0000115615" description="Small ribosomal subunit protein uS15">
    <location>
        <begin position="1"/>
        <end position="151"/>
    </location>
</feature>
<feature type="region of interest" description="Disordered" evidence="2">
    <location>
        <begin position="1"/>
        <end position="20"/>
    </location>
</feature>
<feature type="compositionally biased region" description="Basic residues" evidence="2">
    <location>
        <begin position="1"/>
        <end position="16"/>
    </location>
</feature>
<reference key="1">
    <citation type="journal article" date="2002" name="Proc. Natl. Acad. Sci. U.S.A.">
        <title>Genome sequence of the hyperthermophilic crenarchaeon Pyrobaculum aerophilum.</title>
        <authorList>
            <person name="Fitz-Gibbon S.T."/>
            <person name="Ladner H."/>
            <person name="Kim U.-J."/>
            <person name="Stetter K.O."/>
            <person name="Simon M.I."/>
            <person name="Miller J.H."/>
        </authorList>
    </citation>
    <scope>NUCLEOTIDE SEQUENCE [LARGE SCALE GENOMIC DNA]</scope>
    <source>
        <strain>ATCC 51768 / DSM 7523 / JCM 9630 / CIP 104966 / NBRC 100827 / IM2</strain>
    </source>
</reference>
<organism>
    <name type="scientific">Pyrobaculum aerophilum (strain ATCC 51768 / DSM 7523 / JCM 9630 / CIP 104966 / NBRC 100827 / IM2)</name>
    <dbReference type="NCBI Taxonomy" id="178306"/>
    <lineage>
        <taxon>Archaea</taxon>
        <taxon>Thermoproteota</taxon>
        <taxon>Thermoprotei</taxon>
        <taxon>Thermoproteales</taxon>
        <taxon>Thermoproteaceae</taxon>
        <taxon>Pyrobaculum</taxon>
    </lineage>
</organism>
<dbReference type="EMBL" id="AE009441">
    <property type="protein sequence ID" value="AAL64952.1"/>
    <property type="molecule type" value="Genomic_DNA"/>
</dbReference>
<dbReference type="RefSeq" id="WP_011009419.1">
    <property type="nucleotide sequence ID" value="NC_003364.1"/>
</dbReference>
<dbReference type="SMR" id="Q8ZT11"/>
<dbReference type="FunCoup" id="Q8ZT11">
    <property type="interactions" value="187"/>
</dbReference>
<dbReference type="STRING" id="178306.PAE3485"/>
<dbReference type="EnsemblBacteria" id="AAL64952">
    <property type="protein sequence ID" value="AAL64952"/>
    <property type="gene ID" value="PAE3485"/>
</dbReference>
<dbReference type="GeneID" id="1466083"/>
<dbReference type="KEGG" id="pai:PAE3485"/>
<dbReference type="PATRIC" id="fig|178306.9.peg.2624"/>
<dbReference type="eggNOG" id="arCOG04185">
    <property type="taxonomic scope" value="Archaea"/>
</dbReference>
<dbReference type="HOGENOM" id="CLU_090139_2_0_2"/>
<dbReference type="InParanoid" id="Q8ZT11"/>
<dbReference type="Proteomes" id="UP000002439">
    <property type="component" value="Chromosome"/>
</dbReference>
<dbReference type="GO" id="GO:0022627">
    <property type="term" value="C:cytosolic small ribosomal subunit"/>
    <property type="evidence" value="ECO:0000318"/>
    <property type="project" value="GO_Central"/>
</dbReference>
<dbReference type="GO" id="GO:0070181">
    <property type="term" value="F:small ribosomal subunit rRNA binding"/>
    <property type="evidence" value="ECO:0000318"/>
    <property type="project" value="GO_Central"/>
</dbReference>
<dbReference type="GO" id="GO:0003735">
    <property type="term" value="F:structural constituent of ribosome"/>
    <property type="evidence" value="ECO:0000318"/>
    <property type="project" value="GO_Central"/>
</dbReference>
<dbReference type="GO" id="GO:0006412">
    <property type="term" value="P:translation"/>
    <property type="evidence" value="ECO:0007669"/>
    <property type="project" value="UniProtKB-UniRule"/>
</dbReference>
<dbReference type="CDD" id="cd00353">
    <property type="entry name" value="Ribosomal_S15p_S13e"/>
    <property type="match status" value="1"/>
</dbReference>
<dbReference type="FunFam" id="1.10.287.10:FF:000003">
    <property type="entry name" value="40S ribosomal protein S13"/>
    <property type="match status" value="1"/>
</dbReference>
<dbReference type="FunFam" id="4.10.860.130:FF:000001">
    <property type="entry name" value="40S ribosomal protein S13"/>
    <property type="match status" value="1"/>
</dbReference>
<dbReference type="Gene3D" id="4.10.860.130">
    <property type="match status" value="1"/>
</dbReference>
<dbReference type="Gene3D" id="1.10.287.10">
    <property type="entry name" value="S15/NS1, RNA-binding"/>
    <property type="match status" value="1"/>
</dbReference>
<dbReference type="HAMAP" id="MF_01343_A">
    <property type="entry name" value="Ribosomal_uS15_A"/>
    <property type="match status" value="1"/>
</dbReference>
<dbReference type="InterPro" id="IPR000589">
    <property type="entry name" value="Ribosomal_uS15"/>
</dbReference>
<dbReference type="InterPro" id="IPR023029">
    <property type="entry name" value="Ribosomal_uS15_arc_euk"/>
</dbReference>
<dbReference type="InterPro" id="IPR012606">
    <property type="entry name" value="Ribosomal_uS15_N"/>
</dbReference>
<dbReference type="InterPro" id="IPR009068">
    <property type="entry name" value="uS15_NS1_RNA-bd_sf"/>
</dbReference>
<dbReference type="NCBIfam" id="NF006331">
    <property type="entry name" value="PRK08561.1"/>
    <property type="match status" value="1"/>
</dbReference>
<dbReference type="PANTHER" id="PTHR11885">
    <property type="entry name" value="RIBOSOMAL PROTEIN S15P/S13E"/>
    <property type="match status" value="1"/>
</dbReference>
<dbReference type="PANTHER" id="PTHR11885:SF6">
    <property type="entry name" value="SMALL RIBOSOMAL SUBUNIT PROTEIN US15"/>
    <property type="match status" value="1"/>
</dbReference>
<dbReference type="Pfam" id="PF08069">
    <property type="entry name" value="Ribosomal_S13_N"/>
    <property type="match status" value="1"/>
</dbReference>
<dbReference type="Pfam" id="PF00312">
    <property type="entry name" value="Ribosomal_S15"/>
    <property type="match status" value="1"/>
</dbReference>
<dbReference type="SMART" id="SM01386">
    <property type="entry name" value="Ribosomal_S13_N"/>
    <property type="match status" value="1"/>
</dbReference>
<dbReference type="SMART" id="SM01387">
    <property type="entry name" value="Ribosomal_S15"/>
    <property type="match status" value="1"/>
</dbReference>
<dbReference type="SUPFAM" id="SSF47060">
    <property type="entry name" value="S15/NS1 RNA-binding domain"/>
    <property type="match status" value="1"/>
</dbReference>
<dbReference type="PROSITE" id="PS00362">
    <property type="entry name" value="RIBOSOMAL_S15"/>
    <property type="match status" value="1"/>
</dbReference>
<proteinExistence type="inferred from homology"/>
<keyword id="KW-1185">Reference proteome</keyword>
<keyword id="KW-0687">Ribonucleoprotein</keyword>
<keyword id="KW-0689">Ribosomal protein</keyword>
<evidence type="ECO:0000255" key="1">
    <source>
        <dbReference type="HAMAP-Rule" id="MF_01343"/>
    </source>
</evidence>
<evidence type="ECO:0000256" key="2">
    <source>
        <dbReference type="SAM" id="MobiDB-lite"/>
    </source>
</evidence>
<evidence type="ECO:0000305" key="3"/>
<comment type="subunit">
    <text evidence="1">Part of the 30S ribosomal subunit.</text>
</comment>
<comment type="similarity">
    <text evidence="1">Belongs to the universal ribosomal protein uS15 family.</text>
</comment>
<protein>
    <recommendedName>
        <fullName evidence="1">Small ribosomal subunit protein uS15</fullName>
    </recommendedName>
    <alternativeName>
        <fullName evidence="3">30S ribosomal protein S15</fullName>
    </alternativeName>
</protein>
<sequence length="151" mass="17649">MPHRSRDKKGRSRSVRPAHPTVPTWIQYTPEEVEQLVVELARRGFQPSQIGLILRDQYGIPLVRPITGKKLTKILEEHGIKYELPEDLLNLIRRALRIRKHLEEHPKDMASRRGLQLVESKIHRLVKYYKRVGKLPPDFVYNPQALSHLAT</sequence>
<accession>Q8ZT11</accession>
<gene>
    <name evidence="1" type="primary">rps15</name>
    <name type="ordered locus">PAE3485</name>
</gene>